<comment type="function">
    <text evidence="1">Catalyzes the sequential condensation of isopentenyl diphosphate (IPP) with (2E,6E)-farnesyl diphosphate (E,E-FPP) to yield (2Z,6Z,10Z,14Z,18Z,22Z,26Z,30Z,34E,38E)-undecaprenyl diphosphate (di-trans,octa-cis-UPP). UPP is the precursor of glycosyl carrier lipid in the biosynthesis of bacterial cell wall polysaccharide components such as peptidoglycan and lipopolysaccharide.</text>
</comment>
<comment type="catalytic activity">
    <reaction evidence="1">
        <text>8 isopentenyl diphosphate + (2E,6E)-farnesyl diphosphate = di-trans,octa-cis-undecaprenyl diphosphate + 8 diphosphate</text>
        <dbReference type="Rhea" id="RHEA:27551"/>
        <dbReference type="ChEBI" id="CHEBI:33019"/>
        <dbReference type="ChEBI" id="CHEBI:58405"/>
        <dbReference type="ChEBI" id="CHEBI:128769"/>
        <dbReference type="ChEBI" id="CHEBI:175763"/>
        <dbReference type="EC" id="2.5.1.31"/>
    </reaction>
</comment>
<comment type="cofactor">
    <cofactor evidence="1">
        <name>Mg(2+)</name>
        <dbReference type="ChEBI" id="CHEBI:18420"/>
    </cofactor>
    <text evidence="1">Binds 2 magnesium ions per subunit.</text>
</comment>
<comment type="subunit">
    <text evidence="1">Homodimer.</text>
</comment>
<comment type="similarity">
    <text evidence="1">Belongs to the UPP synthase family.</text>
</comment>
<accession>Q7VM20</accession>
<keyword id="KW-0133">Cell shape</keyword>
<keyword id="KW-0961">Cell wall biogenesis/degradation</keyword>
<keyword id="KW-0460">Magnesium</keyword>
<keyword id="KW-0479">Metal-binding</keyword>
<keyword id="KW-0573">Peptidoglycan synthesis</keyword>
<keyword id="KW-1185">Reference proteome</keyword>
<keyword id="KW-0808">Transferase</keyword>
<gene>
    <name evidence="1" type="primary">uppS</name>
    <name type="ordered locus">HD_1196</name>
</gene>
<feature type="chain" id="PRO_0000123619" description="Ditrans,polycis-undecaprenyl-diphosphate synthase ((2E,6E)-farnesyl-diphosphate specific)">
    <location>
        <begin position="1"/>
        <end position="242"/>
    </location>
</feature>
<feature type="active site" evidence="1">
    <location>
        <position position="21"/>
    </location>
</feature>
<feature type="active site" description="Proton acceptor" evidence="1">
    <location>
        <position position="69"/>
    </location>
</feature>
<feature type="binding site" evidence="1">
    <location>
        <position position="21"/>
    </location>
    <ligand>
        <name>Mg(2+)</name>
        <dbReference type="ChEBI" id="CHEBI:18420"/>
    </ligand>
</feature>
<feature type="binding site" evidence="1">
    <location>
        <begin position="22"/>
        <end position="25"/>
    </location>
    <ligand>
        <name>substrate</name>
    </ligand>
</feature>
<feature type="binding site" evidence="1">
    <location>
        <position position="26"/>
    </location>
    <ligand>
        <name>substrate</name>
    </ligand>
</feature>
<feature type="binding site" evidence="1">
    <location>
        <position position="34"/>
    </location>
    <ligand>
        <name>substrate</name>
    </ligand>
</feature>
<feature type="binding site" evidence="1">
    <location>
        <position position="38"/>
    </location>
    <ligand>
        <name>substrate</name>
    </ligand>
</feature>
<feature type="binding site" evidence="1">
    <location>
        <begin position="66"/>
        <end position="68"/>
    </location>
    <ligand>
        <name>substrate</name>
    </ligand>
</feature>
<feature type="binding site" evidence="1">
    <location>
        <position position="70"/>
    </location>
    <ligand>
        <name>substrate</name>
    </ligand>
</feature>
<feature type="binding site" evidence="1">
    <location>
        <position position="72"/>
    </location>
    <ligand>
        <name>substrate</name>
    </ligand>
</feature>
<feature type="binding site" evidence="1">
    <location>
        <position position="189"/>
    </location>
    <ligand>
        <name>substrate</name>
    </ligand>
</feature>
<feature type="binding site" evidence="1">
    <location>
        <begin position="195"/>
        <end position="197"/>
    </location>
    <ligand>
        <name>substrate</name>
    </ligand>
</feature>
<feature type="binding site" evidence="1">
    <location>
        <position position="208"/>
    </location>
    <ligand>
        <name>Mg(2+)</name>
        <dbReference type="ChEBI" id="CHEBI:18420"/>
    </ligand>
</feature>
<evidence type="ECO:0000255" key="1">
    <source>
        <dbReference type="HAMAP-Rule" id="MF_01139"/>
    </source>
</evidence>
<organism>
    <name type="scientific">Haemophilus ducreyi (strain 35000HP / ATCC 700724)</name>
    <dbReference type="NCBI Taxonomy" id="233412"/>
    <lineage>
        <taxon>Bacteria</taxon>
        <taxon>Pseudomonadati</taxon>
        <taxon>Pseudomonadota</taxon>
        <taxon>Gammaproteobacteria</taxon>
        <taxon>Pasteurellales</taxon>
        <taxon>Pasteurellaceae</taxon>
        <taxon>Haemophilus</taxon>
    </lineage>
</organism>
<name>UPPS_HAEDU</name>
<dbReference type="EC" id="2.5.1.31" evidence="1"/>
<dbReference type="EMBL" id="AE017143">
    <property type="protein sequence ID" value="AAP96044.1"/>
    <property type="molecule type" value="Genomic_DNA"/>
</dbReference>
<dbReference type="SMR" id="Q7VM20"/>
<dbReference type="STRING" id="233412.HD_1196"/>
<dbReference type="KEGG" id="hdu:HD_1196"/>
<dbReference type="eggNOG" id="COG0020">
    <property type="taxonomic scope" value="Bacteria"/>
</dbReference>
<dbReference type="HOGENOM" id="CLU_038505_1_1_6"/>
<dbReference type="Proteomes" id="UP000001022">
    <property type="component" value="Chromosome"/>
</dbReference>
<dbReference type="GO" id="GO:0005829">
    <property type="term" value="C:cytosol"/>
    <property type="evidence" value="ECO:0007669"/>
    <property type="project" value="TreeGrafter"/>
</dbReference>
<dbReference type="GO" id="GO:0008834">
    <property type="term" value="F:ditrans,polycis-undecaprenyl-diphosphate synthase [(2E,6E)-farnesyl-diphosphate specific] activity"/>
    <property type="evidence" value="ECO:0007669"/>
    <property type="project" value="UniProtKB-UniRule"/>
</dbReference>
<dbReference type="GO" id="GO:0000287">
    <property type="term" value="F:magnesium ion binding"/>
    <property type="evidence" value="ECO:0007669"/>
    <property type="project" value="UniProtKB-UniRule"/>
</dbReference>
<dbReference type="GO" id="GO:0071555">
    <property type="term" value="P:cell wall organization"/>
    <property type="evidence" value="ECO:0007669"/>
    <property type="project" value="UniProtKB-KW"/>
</dbReference>
<dbReference type="GO" id="GO:0009252">
    <property type="term" value="P:peptidoglycan biosynthetic process"/>
    <property type="evidence" value="ECO:0007669"/>
    <property type="project" value="UniProtKB-UniRule"/>
</dbReference>
<dbReference type="GO" id="GO:0016094">
    <property type="term" value="P:polyprenol biosynthetic process"/>
    <property type="evidence" value="ECO:0007669"/>
    <property type="project" value="TreeGrafter"/>
</dbReference>
<dbReference type="GO" id="GO:0008360">
    <property type="term" value="P:regulation of cell shape"/>
    <property type="evidence" value="ECO:0007669"/>
    <property type="project" value="UniProtKB-KW"/>
</dbReference>
<dbReference type="CDD" id="cd00475">
    <property type="entry name" value="Cis_IPPS"/>
    <property type="match status" value="1"/>
</dbReference>
<dbReference type="FunFam" id="3.40.1180.10:FF:000001">
    <property type="entry name" value="(2E,6E)-farnesyl-diphosphate-specific ditrans,polycis-undecaprenyl-diphosphate synthase"/>
    <property type="match status" value="1"/>
</dbReference>
<dbReference type="Gene3D" id="3.40.1180.10">
    <property type="entry name" value="Decaprenyl diphosphate synthase-like"/>
    <property type="match status" value="1"/>
</dbReference>
<dbReference type="HAMAP" id="MF_01139">
    <property type="entry name" value="ISPT"/>
    <property type="match status" value="1"/>
</dbReference>
<dbReference type="InterPro" id="IPR001441">
    <property type="entry name" value="UPP_synth-like"/>
</dbReference>
<dbReference type="InterPro" id="IPR018520">
    <property type="entry name" value="UPP_synth-like_CS"/>
</dbReference>
<dbReference type="InterPro" id="IPR036424">
    <property type="entry name" value="UPP_synth-like_sf"/>
</dbReference>
<dbReference type="NCBIfam" id="NF011405">
    <property type="entry name" value="PRK14830.1"/>
    <property type="match status" value="1"/>
</dbReference>
<dbReference type="NCBIfam" id="TIGR00055">
    <property type="entry name" value="uppS"/>
    <property type="match status" value="1"/>
</dbReference>
<dbReference type="PANTHER" id="PTHR10291:SF0">
    <property type="entry name" value="DEHYDRODOLICHYL DIPHOSPHATE SYNTHASE 2"/>
    <property type="match status" value="1"/>
</dbReference>
<dbReference type="PANTHER" id="PTHR10291">
    <property type="entry name" value="DEHYDRODOLICHYL DIPHOSPHATE SYNTHASE FAMILY MEMBER"/>
    <property type="match status" value="1"/>
</dbReference>
<dbReference type="Pfam" id="PF01255">
    <property type="entry name" value="Prenyltransf"/>
    <property type="match status" value="1"/>
</dbReference>
<dbReference type="SUPFAM" id="SSF64005">
    <property type="entry name" value="Undecaprenyl diphosphate synthase"/>
    <property type="match status" value="1"/>
</dbReference>
<dbReference type="PROSITE" id="PS01066">
    <property type="entry name" value="UPP_SYNTHASE"/>
    <property type="match status" value="1"/>
</dbReference>
<reference key="1">
    <citation type="submission" date="2003-06" db="EMBL/GenBank/DDBJ databases">
        <title>The complete genome sequence of Haemophilus ducreyi.</title>
        <authorList>
            <person name="Munson R.S. Jr."/>
            <person name="Ray W.C."/>
            <person name="Mahairas G."/>
            <person name="Sabo P."/>
            <person name="Mungur R."/>
            <person name="Johnson L."/>
            <person name="Nguyen D."/>
            <person name="Wang J."/>
            <person name="Forst C."/>
            <person name="Hood L."/>
        </authorList>
    </citation>
    <scope>NUCLEOTIDE SEQUENCE [LARGE SCALE GENOMIC DNA]</scope>
    <source>
        <strain>35000HP / ATCC 700724</strain>
    </source>
</reference>
<sequence>METSVNFDPSNMPQHVAIIMDGNGRWAKKQGKLRVFGHQNGVNAVRAAVHFAAKYGIKVLTLYAFSSENWNRPATEVSALMSLFIQALNTEVSKLHKHNIRLNILGDKTRFSDSLQKRIIESETLTAHNTRLTLNIAANYGSHWDITEATKKLAEKVKLGKISVTDITPEKVQRALVTAEQPPVDLLIRTSGEQRISNFLLWQIAYAELFFSDVLWPDFDETSFSEAIYAYQQRERRFGGCE</sequence>
<proteinExistence type="inferred from homology"/>
<protein>
    <recommendedName>
        <fullName evidence="1">Ditrans,polycis-undecaprenyl-diphosphate synthase ((2E,6E)-farnesyl-diphosphate specific)</fullName>
        <ecNumber evidence="1">2.5.1.31</ecNumber>
    </recommendedName>
    <alternativeName>
        <fullName evidence="1">Ditrans,polycis-undecaprenylcistransferase</fullName>
    </alternativeName>
    <alternativeName>
        <fullName evidence="1">Undecaprenyl diphosphate synthase</fullName>
        <shortName evidence="1">UDS</shortName>
    </alternativeName>
    <alternativeName>
        <fullName evidence="1">Undecaprenyl pyrophosphate synthase</fullName>
        <shortName evidence="1">UPP synthase</shortName>
    </alternativeName>
</protein>